<gene>
    <name type="primary">AIM21</name>
    <name type="ordered locus">DEHA2B12540g</name>
</gene>
<comment type="function">
    <text evidence="1">Involved in mitochondrial migration along actin filaments.</text>
</comment>
<comment type="subcellular location">
    <subcellularLocation>
        <location evidence="1">Cytoplasm</location>
        <location evidence="1">Cytoskeleton</location>
        <location evidence="1">Actin patch</location>
    </subcellularLocation>
    <text evidence="1">Cortical actin patches.</text>
</comment>
<comment type="similarity">
    <text evidence="3">Belongs to the AIM21 family.</text>
</comment>
<protein>
    <recommendedName>
        <fullName>Altered inheritance of mitochondria protein 21</fullName>
    </recommendedName>
</protein>
<feature type="chain" id="PRO_0000399520" description="Altered inheritance of mitochondria protein 21">
    <location>
        <begin position="1"/>
        <end position="661"/>
    </location>
</feature>
<feature type="region of interest" description="Disordered" evidence="2">
    <location>
        <begin position="1"/>
        <end position="421"/>
    </location>
</feature>
<feature type="region of interest" description="Disordered" evidence="2">
    <location>
        <begin position="454"/>
        <end position="486"/>
    </location>
</feature>
<feature type="region of interest" description="Disordered" evidence="2">
    <location>
        <begin position="512"/>
        <end position="661"/>
    </location>
</feature>
<feature type="compositionally biased region" description="Polar residues" evidence="2">
    <location>
        <begin position="39"/>
        <end position="50"/>
    </location>
</feature>
<feature type="compositionally biased region" description="Polar residues" evidence="2">
    <location>
        <begin position="85"/>
        <end position="95"/>
    </location>
</feature>
<feature type="compositionally biased region" description="Basic and acidic residues" evidence="2">
    <location>
        <begin position="106"/>
        <end position="124"/>
    </location>
</feature>
<feature type="compositionally biased region" description="Basic and acidic residues" evidence="2">
    <location>
        <begin position="138"/>
        <end position="151"/>
    </location>
</feature>
<feature type="compositionally biased region" description="Basic and acidic residues" evidence="2">
    <location>
        <begin position="161"/>
        <end position="178"/>
    </location>
</feature>
<feature type="compositionally biased region" description="Polar residues" evidence="2">
    <location>
        <begin position="192"/>
        <end position="213"/>
    </location>
</feature>
<feature type="compositionally biased region" description="Basic and acidic residues" evidence="2">
    <location>
        <begin position="234"/>
        <end position="271"/>
    </location>
</feature>
<feature type="compositionally biased region" description="Polar residues" evidence="2">
    <location>
        <begin position="319"/>
        <end position="334"/>
    </location>
</feature>
<feature type="compositionally biased region" description="Polar residues" evidence="2">
    <location>
        <begin position="381"/>
        <end position="399"/>
    </location>
</feature>
<feature type="compositionally biased region" description="Basic and acidic residues" evidence="2">
    <location>
        <begin position="400"/>
        <end position="421"/>
    </location>
</feature>
<feature type="compositionally biased region" description="Basic and acidic residues" evidence="2">
    <location>
        <begin position="454"/>
        <end position="464"/>
    </location>
</feature>
<feature type="compositionally biased region" description="Basic and acidic residues" evidence="2">
    <location>
        <begin position="563"/>
        <end position="576"/>
    </location>
</feature>
<feature type="compositionally biased region" description="Polar residues" evidence="2">
    <location>
        <begin position="590"/>
        <end position="607"/>
    </location>
</feature>
<feature type="compositionally biased region" description="Basic and acidic residues" evidence="2">
    <location>
        <begin position="643"/>
        <end position="661"/>
    </location>
</feature>
<dbReference type="EMBL" id="CR382134">
    <property type="protein sequence ID" value="CAG85504.2"/>
    <property type="molecule type" value="Genomic_DNA"/>
</dbReference>
<dbReference type="RefSeq" id="XP_457500.2">
    <property type="nucleotide sequence ID" value="XM_457500.1"/>
</dbReference>
<dbReference type="SMR" id="Q6BWB9"/>
<dbReference type="FunCoup" id="Q6BWB9">
    <property type="interactions" value="120"/>
</dbReference>
<dbReference type="STRING" id="284592.Q6BWB9"/>
<dbReference type="GeneID" id="2913452"/>
<dbReference type="KEGG" id="dha:DEHA2B12540g"/>
<dbReference type="VEuPathDB" id="FungiDB:DEHA2B12540g"/>
<dbReference type="eggNOG" id="ENOG502S25J">
    <property type="taxonomic scope" value="Eukaryota"/>
</dbReference>
<dbReference type="HOGENOM" id="CLU_415057_0_0_1"/>
<dbReference type="InParanoid" id="Q6BWB9"/>
<dbReference type="OMA" id="FQQMFNQ"/>
<dbReference type="OrthoDB" id="4096963at2759"/>
<dbReference type="Proteomes" id="UP000000599">
    <property type="component" value="Chromosome B"/>
</dbReference>
<dbReference type="GO" id="GO:0030479">
    <property type="term" value="C:actin cortical patch"/>
    <property type="evidence" value="ECO:0007669"/>
    <property type="project" value="UniProtKB-SubCell"/>
</dbReference>
<name>AIM21_DEBHA</name>
<organism>
    <name type="scientific">Debaryomyces hansenii (strain ATCC 36239 / CBS 767 / BCRC 21394 / JCM 1990 / NBRC 0083 / IGC 2968)</name>
    <name type="common">Yeast</name>
    <name type="synonym">Torulaspora hansenii</name>
    <dbReference type="NCBI Taxonomy" id="284592"/>
    <lineage>
        <taxon>Eukaryota</taxon>
        <taxon>Fungi</taxon>
        <taxon>Dikarya</taxon>
        <taxon>Ascomycota</taxon>
        <taxon>Saccharomycotina</taxon>
        <taxon>Pichiomycetes</taxon>
        <taxon>Debaryomycetaceae</taxon>
        <taxon>Debaryomyces</taxon>
    </lineage>
</organism>
<sequence>MSDSISRPSIPRRPKKQLQVDLPNHSEGFDRSDTESDNEQMVSLESLESNEASDKIPVIPKRPDRSKSSSKSPSLPAIPKRPQKSDTSGVESPSPSDLPEVENEEENHKSIYDESVSSKKHSDDAIEPPESSEFNYEVGDRSDVDVSDGDKTPGNTNTKTSIKEDLNITDDNSMHSFDDDLETVLQDRDDNGSSSIGPEISQDNNVPSSSESDINAELGEEYTDPDSNSQKSCGNRDKENDELSTESDKRNPNERDQSNKSEEKTIKKDQEVSNTPKVTDAEASEDRDSDNIPHIPRRPKKSKSATSEPDAKSIEVENLDNTNIIDQKQTQTNKDNNEEAYSINETSESKSETPQQEKNTTKPKAPPKPKKLSSKIAAFQQMFNQETAPPRNSGTSKSTSKPDLETKNSENKEVPSRLSTDKMKFAQSLQGMMGKGIAMPGMVNPNFHQKIDTEEIESPDKEVKISNMKRGIAKGPRGKKLPKSLKNPVNVEVTPRFNSFVSTIWELNFQADTKSNDMEGSENVSNNTEAQKSENNEEILNLENKSEYIMDSESVSNSTPASDIKEIREESSPLKIDDDDVYSEIDKSKTTQSESRNLESIDSTEGSRNIDAENLPEEIKSDNDSAASYPKKSEDSDLDLDDNEQHILENQESDLNLRKED</sequence>
<accession>Q6BWB9</accession>
<evidence type="ECO:0000250" key="1"/>
<evidence type="ECO:0000256" key="2">
    <source>
        <dbReference type="SAM" id="MobiDB-lite"/>
    </source>
</evidence>
<evidence type="ECO:0000305" key="3"/>
<keyword id="KW-0963">Cytoplasm</keyword>
<keyword id="KW-0206">Cytoskeleton</keyword>
<keyword id="KW-1185">Reference proteome</keyword>
<reference key="1">
    <citation type="journal article" date="2004" name="Nature">
        <title>Genome evolution in yeasts.</title>
        <authorList>
            <person name="Dujon B."/>
            <person name="Sherman D."/>
            <person name="Fischer G."/>
            <person name="Durrens P."/>
            <person name="Casaregola S."/>
            <person name="Lafontaine I."/>
            <person name="de Montigny J."/>
            <person name="Marck C."/>
            <person name="Neuveglise C."/>
            <person name="Talla E."/>
            <person name="Goffard N."/>
            <person name="Frangeul L."/>
            <person name="Aigle M."/>
            <person name="Anthouard V."/>
            <person name="Babour A."/>
            <person name="Barbe V."/>
            <person name="Barnay S."/>
            <person name="Blanchin S."/>
            <person name="Beckerich J.-M."/>
            <person name="Beyne E."/>
            <person name="Bleykasten C."/>
            <person name="Boisrame A."/>
            <person name="Boyer J."/>
            <person name="Cattolico L."/>
            <person name="Confanioleri F."/>
            <person name="de Daruvar A."/>
            <person name="Despons L."/>
            <person name="Fabre E."/>
            <person name="Fairhead C."/>
            <person name="Ferry-Dumazet H."/>
            <person name="Groppi A."/>
            <person name="Hantraye F."/>
            <person name="Hennequin C."/>
            <person name="Jauniaux N."/>
            <person name="Joyet P."/>
            <person name="Kachouri R."/>
            <person name="Kerrest A."/>
            <person name="Koszul R."/>
            <person name="Lemaire M."/>
            <person name="Lesur I."/>
            <person name="Ma L."/>
            <person name="Muller H."/>
            <person name="Nicaud J.-M."/>
            <person name="Nikolski M."/>
            <person name="Oztas S."/>
            <person name="Ozier-Kalogeropoulos O."/>
            <person name="Pellenz S."/>
            <person name="Potier S."/>
            <person name="Richard G.-F."/>
            <person name="Straub M.-L."/>
            <person name="Suleau A."/>
            <person name="Swennen D."/>
            <person name="Tekaia F."/>
            <person name="Wesolowski-Louvel M."/>
            <person name="Westhof E."/>
            <person name="Wirth B."/>
            <person name="Zeniou-Meyer M."/>
            <person name="Zivanovic Y."/>
            <person name="Bolotin-Fukuhara M."/>
            <person name="Thierry A."/>
            <person name="Bouchier C."/>
            <person name="Caudron B."/>
            <person name="Scarpelli C."/>
            <person name="Gaillardin C."/>
            <person name="Weissenbach J."/>
            <person name="Wincker P."/>
            <person name="Souciet J.-L."/>
        </authorList>
    </citation>
    <scope>NUCLEOTIDE SEQUENCE [LARGE SCALE GENOMIC DNA]</scope>
    <source>
        <strain>ATCC 36239 / CBS 767 / BCRC 21394 / JCM 1990 / NBRC 0083 / IGC 2968</strain>
    </source>
</reference>
<proteinExistence type="inferred from homology"/>